<name>RCNA_SALTY</name>
<gene>
    <name type="primary">rcnA</name>
    <name type="ordered locus">STM3024</name>
</gene>
<evidence type="ECO:0000250" key="1"/>
<evidence type="ECO:0000255" key="2"/>
<evidence type="ECO:0000256" key="3">
    <source>
        <dbReference type="SAM" id="MobiDB-lite"/>
    </source>
</evidence>
<evidence type="ECO:0000305" key="4"/>
<protein>
    <recommendedName>
        <fullName>Nickel/cobalt efflux system RcnA</fullName>
    </recommendedName>
</protein>
<keyword id="KW-0997">Cell inner membrane</keyword>
<keyword id="KW-1003">Cell membrane</keyword>
<keyword id="KW-0170">Cobalt</keyword>
<keyword id="KW-0171">Cobalt transport</keyword>
<keyword id="KW-0406">Ion transport</keyword>
<keyword id="KW-0472">Membrane</keyword>
<keyword id="KW-0533">Nickel</keyword>
<keyword id="KW-0921">Nickel transport</keyword>
<keyword id="KW-1185">Reference proteome</keyword>
<keyword id="KW-0812">Transmembrane</keyword>
<keyword id="KW-1133">Transmembrane helix</keyword>
<keyword id="KW-0813">Transport</keyword>
<comment type="function">
    <text evidence="1">Efflux system for nickel and cobalt.</text>
</comment>
<comment type="subcellular location">
    <subcellularLocation>
        <location evidence="1">Cell inner membrane</location>
        <topology evidence="1">Multi-pass membrane protein</topology>
    </subcellularLocation>
</comment>
<comment type="induction">
    <text evidence="1">By nickel and cobalt. Transcriptionally repressed by RcnR (By similarity).</text>
</comment>
<comment type="similarity">
    <text evidence="4">Belongs to the NiCoT transporter (TC 2.A.52) family. RcnA subfamily.</text>
</comment>
<accession>Q8ZM94</accession>
<organism>
    <name type="scientific">Salmonella typhimurium (strain LT2 / SGSC1412 / ATCC 700720)</name>
    <dbReference type="NCBI Taxonomy" id="99287"/>
    <lineage>
        <taxon>Bacteria</taxon>
        <taxon>Pseudomonadati</taxon>
        <taxon>Pseudomonadota</taxon>
        <taxon>Gammaproteobacteria</taxon>
        <taxon>Enterobacterales</taxon>
        <taxon>Enterobacteriaceae</taxon>
        <taxon>Salmonella</taxon>
    </lineage>
</organism>
<sequence length="288" mass="31541">MGEFSTLLQQGNGWFFIPSAILLGILHGLEPGHSKTMMAAFIIAIKGTVKQAVMLGLAATLSHTAIVWLIALGGMYLSRAFTAQSVEPWLQLISAIIILSTACWMFWRTWRGEQQWLAGNHHHDHDHDHDHDHDHDHDHDHDHDHDHDHHGHIHPEGATSKAYQDAHERAHAADIQRRFDGQTVTNGQILLFGLTGGLIPCPAAITVLLICIQLKAFTLGATMVLSFSLGLALTLVTVGVGAAISVQQAAKRWSGFSTLARRAPYFSSILIGLVGVYMGIHGYTGIMQ</sequence>
<dbReference type="EMBL" id="AE006468">
    <property type="protein sequence ID" value="AAL21900.1"/>
    <property type="molecule type" value="Genomic_DNA"/>
</dbReference>
<dbReference type="RefSeq" id="WP_000503682.1">
    <property type="nucleotide sequence ID" value="NC_003197.2"/>
</dbReference>
<dbReference type="STRING" id="99287.STM3024"/>
<dbReference type="PaxDb" id="99287-STM3024"/>
<dbReference type="KEGG" id="stm:STM3024"/>
<dbReference type="PATRIC" id="fig|99287.12.peg.3200"/>
<dbReference type="HOGENOM" id="CLU_058605_2_0_6"/>
<dbReference type="PhylomeDB" id="Q8ZM94"/>
<dbReference type="BioCyc" id="SENT99287:STM3024-MONOMER"/>
<dbReference type="Proteomes" id="UP000001014">
    <property type="component" value="Chromosome"/>
</dbReference>
<dbReference type="GO" id="GO:0005886">
    <property type="term" value="C:plasma membrane"/>
    <property type="evidence" value="ECO:0000318"/>
    <property type="project" value="GO_Central"/>
</dbReference>
<dbReference type="GO" id="GO:0015099">
    <property type="term" value="F:nickel cation transmembrane transporter activity"/>
    <property type="evidence" value="ECO:0000318"/>
    <property type="project" value="GO_Central"/>
</dbReference>
<dbReference type="GO" id="GO:0006824">
    <property type="term" value="P:cobalt ion transport"/>
    <property type="evidence" value="ECO:0007669"/>
    <property type="project" value="UniProtKB-KW"/>
</dbReference>
<dbReference type="GO" id="GO:0032025">
    <property type="term" value="P:response to cobalt ion"/>
    <property type="evidence" value="ECO:0000318"/>
    <property type="project" value="GO_Central"/>
</dbReference>
<dbReference type="GO" id="GO:0010045">
    <property type="term" value="P:response to nickel cation"/>
    <property type="evidence" value="ECO:0000318"/>
    <property type="project" value="GO_Central"/>
</dbReference>
<dbReference type="FunFam" id="3.40.50.1980:FF:000080">
    <property type="entry name" value="Nickel/cobalt efflux system"/>
    <property type="match status" value="1"/>
</dbReference>
<dbReference type="Gene3D" id="3.40.50.1980">
    <property type="entry name" value="Nitrogenase molybdenum iron protein domain"/>
    <property type="match status" value="1"/>
</dbReference>
<dbReference type="InterPro" id="IPR011541">
    <property type="entry name" value="Ni/Co_transpt_high_affinity"/>
</dbReference>
<dbReference type="InterPro" id="IPR051224">
    <property type="entry name" value="NiCoT_RcnA"/>
</dbReference>
<dbReference type="NCBIfam" id="NF007454">
    <property type="entry name" value="PRK10019.1"/>
    <property type="match status" value="1"/>
</dbReference>
<dbReference type="PANTHER" id="PTHR40659">
    <property type="entry name" value="NICKEL/COBALT EFFLUX SYSTEM RCNA"/>
    <property type="match status" value="1"/>
</dbReference>
<dbReference type="PANTHER" id="PTHR40659:SF1">
    <property type="entry name" value="NICKEL_COBALT EFFLUX SYSTEM RCNA"/>
    <property type="match status" value="1"/>
</dbReference>
<dbReference type="Pfam" id="PF03824">
    <property type="entry name" value="NicO"/>
    <property type="match status" value="1"/>
</dbReference>
<proteinExistence type="inferred from homology"/>
<feature type="chain" id="PRO_0000194013" description="Nickel/cobalt efflux system RcnA">
    <location>
        <begin position="1"/>
        <end position="288"/>
    </location>
</feature>
<feature type="topological domain" description="Periplasmic" evidence="2">
    <location>
        <begin position="1"/>
        <end position="12"/>
    </location>
</feature>
<feature type="transmembrane region" description="Helical" evidence="2">
    <location>
        <begin position="13"/>
        <end position="33"/>
    </location>
</feature>
<feature type="topological domain" description="Cytoplasmic" evidence="2">
    <location>
        <begin position="34"/>
        <end position="51"/>
    </location>
</feature>
<feature type="transmembrane region" description="Helical" evidence="2">
    <location>
        <begin position="52"/>
        <end position="72"/>
    </location>
</feature>
<feature type="topological domain" description="Periplasmic" evidence="2">
    <location>
        <begin position="73"/>
        <end position="85"/>
    </location>
</feature>
<feature type="transmembrane region" description="Helical" evidence="2">
    <location>
        <begin position="86"/>
        <end position="106"/>
    </location>
</feature>
<feature type="topological domain" description="Cytoplasmic" evidence="2">
    <location>
        <begin position="107"/>
        <end position="188"/>
    </location>
</feature>
<feature type="transmembrane region" description="Helical" evidence="2">
    <location>
        <begin position="189"/>
        <end position="209"/>
    </location>
</feature>
<feature type="topological domain" description="Periplasmic" evidence="2">
    <location>
        <begin position="210"/>
        <end position="223"/>
    </location>
</feature>
<feature type="transmembrane region" description="Helical" evidence="2">
    <location>
        <begin position="224"/>
        <end position="244"/>
    </location>
</feature>
<feature type="topological domain" description="Cytoplasmic" evidence="2">
    <location>
        <begin position="245"/>
        <end position="265"/>
    </location>
</feature>
<feature type="transmembrane region" description="Helical" evidence="2">
    <location>
        <begin position="266"/>
        <end position="286"/>
    </location>
</feature>
<feature type="topological domain" description="Periplasmic" evidence="2">
    <location>
        <begin position="287"/>
        <end position="288"/>
    </location>
</feature>
<feature type="region of interest" description="Disordered" evidence="3">
    <location>
        <begin position="122"/>
        <end position="166"/>
    </location>
</feature>
<feature type="compositionally biased region" description="Basic and acidic residues" evidence="3">
    <location>
        <begin position="122"/>
        <end position="155"/>
    </location>
</feature>
<reference key="1">
    <citation type="journal article" date="2001" name="Nature">
        <title>Complete genome sequence of Salmonella enterica serovar Typhimurium LT2.</title>
        <authorList>
            <person name="McClelland M."/>
            <person name="Sanderson K.E."/>
            <person name="Spieth J."/>
            <person name="Clifton S.W."/>
            <person name="Latreille P."/>
            <person name="Courtney L."/>
            <person name="Porwollik S."/>
            <person name="Ali J."/>
            <person name="Dante M."/>
            <person name="Du F."/>
            <person name="Hou S."/>
            <person name="Layman D."/>
            <person name="Leonard S."/>
            <person name="Nguyen C."/>
            <person name="Scott K."/>
            <person name="Holmes A."/>
            <person name="Grewal N."/>
            <person name="Mulvaney E."/>
            <person name="Ryan E."/>
            <person name="Sun H."/>
            <person name="Florea L."/>
            <person name="Miller W."/>
            <person name="Stoneking T."/>
            <person name="Nhan M."/>
            <person name="Waterston R."/>
            <person name="Wilson R.K."/>
        </authorList>
    </citation>
    <scope>NUCLEOTIDE SEQUENCE [LARGE SCALE GENOMIC DNA]</scope>
    <source>
        <strain>LT2 / SGSC1412 / ATCC 700720</strain>
    </source>
</reference>